<keyword id="KW-0414">Isoprene biosynthesis</keyword>
<keyword id="KW-0548">Nucleotidyltransferase</keyword>
<keyword id="KW-0808">Transferase</keyword>
<reference key="1">
    <citation type="journal article" date="2004" name="J. Bacteriol.">
        <title>Comparative genomics of two Leptospira interrogans serovars reveals novel insights into physiology and pathogenesis.</title>
        <authorList>
            <person name="Nascimento A.L.T.O."/>
            <person name="Ko A.I."/>
            <person name="Martins E.A.L."/>
            <person name="Monteiro-Vitorello C.B."/>
            <person name="Ho P.L."/>
            <person name="Haake D.A."/>
            <person name="Verjovski-Almeida S."/>
            <person name="Hartskeerl R.A."/>
            <person name="Marques M.V."/>
            <person name="Oliveira M.C."/>
            <person name="Menck C.F.M."/>
            <person name="Leite L.C.C."/>
            <person name="Carrer H."/>
            <person name="Coutinho L.L."/>
            <person name="Degrave W.M."/>
            <person name="Dellagostin O.A."/>
            <person name="El-Dorry H."/>
            <person name="Ferro E.S."/>
            <person name="Ferro M.I.T."/>
            <person name="Furlan L.R."/>
            <person name="Gamberini M."/>
            <person name="Giglioti E.A."/>
            <person name="Goes-Neto A."/>
            <person name="Goldman G.H."/>
            <person name="Goldman M.H.S."/>
            <person name="Harakava R."/>
            <person name="Jeronimo S.M.B."/>
            <person name="Junqueira-de-Azevedo I.L.M."/>
            <person name="Kimura E.T."/>
            <person name="Kuramae E.E."/>
            <person name="Lemos E.G.M."/>
            <person name="Lemos M.V.F."/>
            <person name="Marino C.L."/>
            <person name="Nunes L.R."/>
            <person name="de Oliveira R.C."/>
            <person name="Pereira G.G."/>
            <person name="Reis M.S."/>
            <person name="Schriefer A."/>
            <person name="Siqueira W.J."/>
            <person name="Sommer P."/>
            <person name="Tsai S.M."/>
            <person name="Simpson A.J.G."/>
            <person name="Ferro J.A."/>
            <person name="Camargo L.E.A."/>
            <person name="Kitajima J.P."/>
            <person name="Setubal J.C."/>
            <person name="Van Sluys M.A."/>
        </authorList>
    </citation>
    <scope>NUCLEOTIDE SEQUENCE [LARGE SCALE GENOMIC DNA]</scope>
    <source>
        <strain>Fiocruz L1-130</strain>
    </source>
</reference>
<comment type="function">
    <text evidence="1">Catalyzes the formation of 4-diphosphocytidyl-2-C-methyl-D-erythritol from CTP and 2-C-methyl-D-erythritol 4-phosphate (MEP).</text>
</comment>
<comment type="catalytic activity">
    <reaction evidence="1">
        <text>2-C-methyl-D-erythritol 4-phosphate + CTP + H(+) = 4-CDP-2-C-methyl-D-erythritol + diphosphate</text>
        <dbReference type="Rhea" id="RHEA:13429"/>
        <dbReference type="ChEBI" id="CHEBI:15378"/>
        <dbReference type="ChEBI" id="CHEBI:33019"/>
        <dbReference type="ChEBI" id="CHEBI:37563"/>
        <dbReference type="ChEBI" id="CHEBI:57823"/>
        <dbReference type="ChEBI" id="CHEBI:58262"/>
        <dbReference type="EC" id="2.7.7.60"/>
    </reaction>
</comment>
<comment type="pathway">
    <text evidence="1">Isoprenoid biosynthesis; isopentenyl diphosphate biosynthesis via DXP pathway; isopentenyl diphosphate from 1-deoxy-D-xylulose 5-phosphate: step 2/6.</text>
</comment>
<comment type="similarity">
    <text evidence="1">Belongs to the IspD/TarI cytidylyltransferase family. IspD subfamily.</text>
</comment>
<proteinExistence type="inferred from homology"/>
<feature type="chain" id="PRO_0000075581" description="2-C-methyl-D-erythritol 4-phosphate cytidylyltransferase">
    <location>
        <begin position="1"/>
        <end position="238"/>
    </location>
</feature>
<feature type="site" description="Transition state stabilizer" evidence="1">
    <location>
        <position position="22"/>
    </location>
</feature>
<feature type="site" description="Transition state stabilizer" evidence="1">
    <location>
        <position position="29"/>
    </location>
</feature>
<feature type="site" description="Positions MEP for the nucleophilic attack" evidence="1">
    <location>
        <position position="160"/>
    </location>
</feature>
<feature type="site" description="Positions MEP for the nucleophilic attack" evidence="1">
    <location>
        <position position="214"/>
    </location>
</feature>
<name>ISPD_LEPIC</name>
<protein>
    <recommendedName>
        <fullName evidence="1">2-C-methyl-D-erythritol 4-phosphate cytidylyltransferase</fullName>
        <ecNumber evidence="1">2.7.7.60</ecNumber>
    </recommendedName>
    <alternativeName>
        <fullName evidence="1">4-diphosphocytidyl-2C-methyl-D-erythritol synthase</fullName>
    </alternativeName>
    <alternativeName>
        <fullName evidence="1">MEP cytidylyltransferase</fullName>
        <shortName evidence="1">MCT</shortName>
    </alternativeName>
</protein>
<dbReference type="EC" id="2.7.7.60" evidence="1"/>
<dbReference type="EMBL" id="AE016823">
    <property type="protein sequence ID" value="AAS71177.1"/>
    <property type="molecule type" value="Genomic_DNA"/>
</dbReference>
<dbReference type="RefSeq" id="WP_000838282.1">
    <property type="nucleotide sequence ID" value="NC_005823.1"/>
</dbReference>
<dbReference type="SMR" id="Q72P59"/>
<dbReference type="KEGG" id="lic:LIC_12617"/>
<dbReference type="HOGENOM" id="CLU_061281_2_2_12"/>
<dbReference type="UniPathway" id="UPA00056">
    <property type="reaction ID" value="UER00093"/>
</dbReference>
<dbReference type="Proteomes" id="UP000007037">
    <property type="component" value="Chromosome I"/>
</dbReference>
<dbReference type="GO" id="GO:0005829">
    <property type="term" value="C:cytosol"/>
    <property type="evidence" value="ECO:0007669"/>
    <property type="project" value="TreeGrafter"/>
</dbReference>
<dbReference type="GO" id="GO:0050518">
    <property type="term" value="F:2-C-methyl-D-erythritol 4-phosphate cytidylyltransferase activity"/>
    <property type="evidence" value="ECO:0007669"/>
    <property type="project" value="UniProtKB-UniRule"/>
</dbReference>
<dbReference type="GO" id="GO:0019288">
    <property type="term" value="P:isopentenyl diphosphate biosynthetic process, methylerythritol 4-phosphate pathway"/>
    <property type="evidence" value="ECO:0007669"/>
    <property type="project" value="UniProtKB-UniRule"/>
</dbReference>
<dbReference type="CDD" id="cd02516">
    <property type="entry name" value="CDP-ME_synthetase"/>
    <property type="match status" value="1"/>
</dbReference>
<dbReference type="Gene3D" id="3.90.550.10">
    <property type="entry name" value="Spore Coat Polysaccharide Biosynthesis Protein SpsA, Chain A"/>
    <property type="match status" value="1"/>
</dbReference>
<dbReference type="HAMAP" id="MF_00108">
    <property type="entry name" value="IspD"/>
    <property type="match status" value="1"/>
</dbReference>
<dbReference type="InterPro" id="IPR001228">
    <property type="entry name" value="IspD"/>
</dbReference>
<dbReference type="InterPro" id="IPR034683">
    <property type="entry name" value="IspD/TarI"/>
</dbReference>
<dbReference type="InterPro" id="IPR018294">
    <property type="entry name" value="ISPD_synthase_CS"/>
</dbReference>
<dbReference type="InterPro" id="IPR029044">
    <property type="entry name" value="Nucleotide-diphossugar_trans"/>
</dbReference>
<dbReference type="PANTHER" id="PTHR43015">
    <property type="entry name" value="D-RIBITOL-5-PHOSPHATE CYTIDYLYLTRANSFERASE"/>
    <property type="match status" value="1"/>
</dbReference>
<dbReference type="PANTHER" id="PTHR43015:SF1">
    <property type="entry name" value="D-RIBITOL-5-PHOSPHATE CYTIDYLYLTRANSFERASE"/>
    <property type="match status" value="1"/>
</dbReference>
<dbReference type="Pfam" id="PF01128">
    <property type="entry name" value="IspD"/>
    <property type="match status" value="1"/>
</dbReference>
<dbReference type="SUPFAM" id="SSF53448">
    <property type="entry name" value="Nucleotide-diphospho-sugar transferases"/>
    <property type="match status" value="1"/>
</dbReference>
<dbReference type="PROSITE" id="PS01295">
    <property type="entry name" value="ISPD"/>
    <property type="match status" value="1"/>
</dbReference>
<organism>
    <name type="scientific">Leptospira interrogans serogroup Icterohaemorrhagiae serovar copenhageni (strain Fiocruz L1-130)</name>
    <dbReference type="NCBI Taxonomy" id="267671"/>
    <lineage>
        <taxon>Bacteria</taxon>
        <taxon>Pseudomonadati</taxon>
        <taxon>Spirochaetota</taxon>
        <taxon>Spirochaetia</taxon>
        <taxon>Leptospirales</taxon>
        <taxon>Leptospiraceae</taxon>
        <taxon>Leptospira</taxon>
    </lineage>
</organism>
<sequence>MKSLFLSEKIYVLILAGGTGSRMGSKIPKQFLELNGEPILIHSLKRFQNWGKQKRIVLVSHFESIPKIESICASYLENEDRIVQGGENRHSSMLCGLSVLDFKDEDIILVHDAARPFVLADELDSLCEKVRSDGIATLASRTSETVLEELNGKTVSFLDREHVWFMKTPQGIRGDVLKELLTFSVDSIPTDLCSWALTFGKTSSIVESNPLNLKITRKEDLDLAEVFSSLFQKISSDI</sequence>
<evidence type="ECO:0000255" key="1">
    <source>
        <dbReference type="HAMAP-Rule" id="MF_00108"/>
    </source>
</evidence>
<gene>
    <name evidence="1" type="primary">ispD</name>
    <name type="ordered locus">LIC_12617</name>
</gene>
<accession>Q72P59</accession>